<feature type="chain" id="PRO_1000046149" description="Large ribosomal subunit protein uL11">
    <location>
        <begin position="1"/>
        <end position="143"/>
    </location>
</feature>
<reference key="1">
    <citation type="submission" date="2006-08" db="EMBL/GenBank/DDBJ databases">
        <title>Complete sequence of chromosome 1 of Burkholderia cenocepacia HI2424.</title>
        <authorList>
            <person name="Copeland A."/>
            <person name="Lucas S."/>
            <person name="Lapidus A."/>
            <person name="Barry K."/>
            <person name="Detter J.C."/>
            <person name="Glavina del Rio T."/>
            <person name="Hammon N."/>
            <person name="Israni S."/>
            <person name="Pitluck S."/>
            <person name="Chain P."/>
            <person name="Malfatti S."/>
            <person name="Shin M."/>
            <person name="Vergez L."/>
            <person name="Schmutz J."/>
            <person name="Larimer F."/>
            <person name="Land M."/>
            <person name="Hauser L."/>
            <person name="Kyrpides N."/>
            <person name="Kim E."/>
            <person name="LiPuma J.J."/>
            <person name="Gonzalez C.F."/>
            <person name="Konstantinidis K."/>
            <person name="Tiedje J.M."/>
            <person name="Richardson P."/>
        </authorList>
    </citation>
    <scope>NUCLEOTIDE SEQUENCE [LARGE SCALE GENOMIC DNA]</scope>
    <source>
        <strain>HI2424</strain>
    </source>
</reference>
<dbReference type="EMBL" id="CP000458">
    <property type="protein sequence ID" value="ABK07090.1"/>
    <property type="molecule type" value="Genomic_DNA"/>
</dbReference>
<dbReference type="RefSeq" id="WP_006477201.1">
    <property type="nucleotide sequence ID" value="NC_008542.1"/>
</dbReference>
<dbReference type="SMR" id="A0K3L3"/>
<dbReference type="GeneID" id="93193463"/>
<dbReference type="KEGG" id="bch:Bcen2424_0336"/>
<dbReference type="HOGENOM" id="CLU_074237_2_0_4"/>
<dbReference type="GO" id="GO:0022625">
    <property type="term" value="C:cytosolic large ribosomal subunit"/>
    <property type="evidence" value="ECO:0007669"/>
    <property type="project" value="TreeGrafter"/>
</dbReference>
<dbReference type="GO" id="GO:0070180">
    <property type="term" value="F:large ribosomal subunit rRNA binding"/>
    <property type="evidence" value="ECO:0007669"/>
    <property type="project" value="UniProtKB-UniRule"/>
</dbReference>
<dbReference type="GO" id="GO:0003735">
    <property type="term" value="F:structural constituent of ribosome"/>
    <property type="evidence" value="ECO:0007669"/>
    <property type="project" value="InterPro"/>
</dbReference>
<dbReference type="GO" id="GO:0006412">
    <property type="term" value="P:translation"/>
    <property type="evidence" value="ECO:0007669"/>
    <property type="project" value="UniProtKB-UniRule"/>
</dbReference>
<dbReference type="CDD" id="cd00349">
    <property type="entry name" value="Ribosomal_L11"/>
    <property type="match status" value="1"/>
</dbReference>
<dbReference type="FunFam" id="1.10.10.250:FF:000001">
    <property type="entry name" value="50S ribosomal protein L11"/>
    <property type="match status" value="1"/>
</dbReference>
<dbReference type="FunFam" id="3.30.1550.10:FF:000001">
    <property type="entry name" value="50S ribosomal protein L11"/>
    <property type="match status" value="1"/>
</dbReference>
<dbReference type="Gene3D" id="1.10.10.250">
    <property type="entry name" value="Ribosomal protein L11, C-terminal domain"/>
    <property type="match status" value="1"/>
</dbReference>
<dbReference type="Gene3D" id="3.30.1550.10">
    <property type="entry name" value="Ribosomal protein L11/L12, N-terminal domain"/>
    <property type="match status" value="1"/>
</dbReference>
<dbReference type="HAMAP" id="MF_00736">
    <property type="entry name" value="Ribosomal_uL11"/>
    <property type="match status" value="1"/>
</dbReference>
<dbReference type="InterPro" id="IPR000911">
    <property type="entry name" value="Ribosomal_uL11"/>
</dbReference>
<dbReference type="InterPro" id="IPR006519">
    <property type="entry name" value="Ribosomal_uL11_bac-typ"/>
</dbReference>
<dbReference type="InterPro" id="IPR020783">
    <property type="entry name" value="Ribosomal_uL11_C"/>
</dbReference>
<dbReference type="InterPro" id="IPR036769">
    <property type="entry name" value="Ribosomal_uL11_C_sf"/>
</dbReference>
<dbReference type="InterPro" id="IPR020785">
    <property type="entry name" value="Ribosomal_uL11_CS"/>
</dbReference>
<dbReference type="InterPro" id="IPR020784">
    <property type="entry name" value="Ribosomal_uL11_N"/>
</dbReference>
<dbReference type="InterPro" id="IPR036796">
    <property type="entry name" value="Ribosomal_uL11_N_sf"/>
</dbReference>
<dbReference type="NCBIfam" id="TIGR01632">
    <property type="entry name" value="L11_bact"/>
    <property type="match status" value="1"/>
</dbReference>
<dbReference type="PANTHER" id="PTHR11661">
    <property type="entry name" value="60S RIBOSOMAL PROTEIN L12"/>
    <property type="match status" value="1"/>
</dbReference>
<dbReference type="PANTHER" id="PTHR11661:SF1">
    <property type="entry name" value="LARGE RIBOSOMAL SUBUNIT PROTEIN UL11M"/>
    <property type="match status" value="1"/>
</dbReference>
<dbReference type="Pfam" id="PF00298">
    <property type="entry name" value="Ribosomal_L11"/>
    <property type="match status" value="1"/>
</dbReference>
<dbReference type="Pfam" id="PF03946">
    <property type="entry name" value="Ribosomal_L11_N"/>
    <property type="match status" value="1"/>
</dbReference>
<dbReference type="SMART" id="SM00649">
    <property type="entry name" value="RL11"/>
    <property type="match status" value="1"/>
</dbReference>
<dbReference type="SUPFAM" id="SSF54747">
    <property type="entry name" value="Ribosomal L11/L12e N-terminal domain"/>
    <property type="match status" value="1"/>
</dbReference>
<dbReference type="SUPFAM" id="SSF46906">
    <property type="entry name" value="Ribosomal protein L11, C-terminal domain"/>
    <property type="match status" value="1"/>
</dbReference>
<dbReference type="PROSITE" id="PS00359">
    <property type="entry name" value="RIBOSOMAL_L11"/>
    <property type="match status" value="1"/>
</dbReference>
<comment type="function">
    <text evidence="1">Forms part of the ribosomal stalk which helps the ribosome interact with GTP-bound translation factors.</text>
</comment>
<comment type="subunit">
    <text evidence="1">Part of the ribosomal stalk of the 50S ribosomal subunit. Interacts with L10 and the large rRNA to form the base of the stalk. L10 forms an elongated spine to which L12 dimers bind in a sequential fashion forming a multimeric L10(L12)X complex.</text>
</comment>
<comment type="PTM">
    <text evidence="1">One or more lysine residues are methylated.</text>
</comment>
<comment type="similarity">
    <text evidence="1">Belongs to the universal ribosomal protein uL11 family.</text>
</comment>
<name>RL11_BURCH</name>
<gene>
    <name evidence="1" type="primary">rplK</name>
    <name type="ordered locus">Bcen2424_0336</name>
</gene>
<keyword id="KW-0488">Methylation</keyword>
<keyword id="KW-0687">Ribonucleoprotein</keyword>
<keyword id="KW-0689">Ribosomal protein</keyword>
<keyword id="KW-0694">RNA-binding</keyword>
<keyword id="KW-0699">rRNA-binding</keyword>
<sequence length="143" mass="14916">MAKKIIGFIKLQIPAGKANPSPPVGPALGQRGLNIMEFCKAFNAQTQGMEPGLPVPVVITAFADKSFTFVMKTPPATVLIKKAAKVDKGSSKPHTDKVGSITRAQAEEIAKTKMPDLTAADLDAAVRTIAGSARSMGITVEGV</sequence>
<protein>
    <recommendedName>
        <fullName evidence="1">Large ribosomal subunit protein uL11</fullName>
    </recommendedName>
    <alternativeName>
        <fullName evidence="2">50S ribosomal protein L11</fullName>
    </alternativeName>
</protein>
<organism>
    <name type="scientific">Burkholderia cenocepacia (strain HI2424)</name>
    <dbReference type="NCBI Taxonomy" id="331272"/>
    <lineage>
        <taxon>Bacteria</taxon>
        <taxon>Pseudomonadati</taxon>
        <taxon>Pseudomonadota</taxon>
        <taxon>Betaproteobacteria</taxon>
        <taxon>Burkholderiales</taxon>
        <taxon>Burkholderiaceae</taxon>
        <taxon>Burkholderia</taxon>
        <taxon>Burkholderia cepacia complex</taxon>
    </lineage>
</organism>
<accession>A0K3L3</accession>
<evidence type="ECO:0000255" key="1">
    <source>
        <dbReference type="HAMAP-Rule" id="MF_00736"/>
    </source>
</evidence>
<evidence type="ECO:0000305" key="2"/>
<proteinExistence type="inferred from homology"/>